<keyword id="KW-0067">ATP-binding</keyword>
<keyword id="KW-0460">Magnesium</keyword>
<keyword id="KW-0547">Nucleotide-binding</keyword>
<keyword id="KW-0808">Transferase</keyword>
<keyword id="KW-0819">tRNA processing</keyword>
<name>MIAA_ALIFM</name>
<evidence type="ECO:0000255" key="1">
    <source>
        <dbReference type="HAMAP-Rule" id="MF_00185"/>
    </source>
</evidence>
<gene>
    <name evidence="1" type="primary">miaA</name>
    <name type="ordered locus">VFMJ11_2437</name>
</gene>
<organism>
    <name type="scientific">Aliivibrio fischeri (strain MJ11)</name>
    <name type="common">Vibrio fischeri</name>
    <dbReference type="NCBI Taxonomy" id="388396"/>
    <lineage>
        <taxon>Bacteria</taxon>
        <taxon>Pseudomonadati</taxon>
        <taxon>Pseudomonadota</taxon>
        <taxon>Gammaproteobacteria</taxon>
        <taxon>Vibrionales</taxon>
        <taxon>Vibrionaceae</taxon>
        <taxon>Aliivibrio</taxon>
    </lineage>
</organism>
<sequence>MNKALPKAIFLMGPTASGKTNLAIELRKRFPVELISVDSALIYKGMDIGTAKPNAEELLQAPHRLIDILEPTESYSAADFRRDALKEMDDIVAQGKIPLLVGGTMLYYKALLEGLSPLPAADADIRAQIEQEAEQFGWEAMHDQLKSIDPVSAERIHPNDPQRLSRALEVFRISGKTLTELTQIKGDALPYEVHQFAIAPKERAEIHRRIELRFANMMEEGFEAEARALYERDDLHADLPSIRCVGYRQMWDYFDGEGTLDEAVFRGICATRQLAKRQITWLRSWKELTWLDSDDIDGALELISTQLEKK</sequence>
<comment type="function">
    <text evidence="1">Catalyzes the transfer of a dimethylallyl group onto the adenine at position 37 in tRNAs that read codons beginning with uridine, leading to the formation of N6-(dimethylallyl)adenosine (i(6)A).</text>
</comment>
<comment type="catalytic activity">
    <reaction evidence="1">
        <text>adenosine(37) in tRNA + dimethylallyl diphosphate = N(6)-dimethylallyladenosine(37) in tRNA + diphosphate</text>
        <dbReference type="Rhea" id="RHEA:26482"/>
        <dbReference type="Rhea" id="RHEA-COMP:10162"/>
        <dbReference type="Rhea" id="RHEA-COMP:10375"/>
        <dbReference type="ChEBI" id="CHEBI:33019"/>
        <dbReference type="ChEBI" id="CHEBI:57623"/>
        <dbReference type="ChEBI" id="CHEBI:74411"/>
        <dbReference type="ChEBI" id="CHEBI:74415"/>
        <dbReference type="EC" id="2.5.1.75"/>
    </reaction>
</comment>
<comment type="cofactor">
    <cofactor evidence="1">
        <name>Mg(2+)</name>
        <dbReference type="ChEBI" id="CHEBI:18420"/>
    </cofactor>
</comment>
<comment type="subunit">
    <text evidence="1">Monomer.</text>
</comment>
<comment type="similarity">
    <text evidence="1">Belongs to the IPP transferase family.</text>
</comment>
<dbReference type="EC" id="2.5.1.75" evidence="1"/>
<dbReference type="EMBL" id="CP001139">
    <property type="protein sequence ID" value="ACH65477.1"/>
    <property type="molecule type" value="Genomic_DNA"/>
</dbReference>
<dbReference type="RefSeq" id="WP_012533078.1">
    <property type="nucleotide sequence ID" value="NC_011184.1"/>
</dbReference>
<dbReference type="SMR" id="B5FBR5"/>
<dbReference type="KEGG" id="vfm:VFMJ11_2437"/>
<dbReference type="HOGENOM" id="CLU_032616_0_0_6"/>
<dbReference type="Proteomes" id="UP000001857">
    <property type="component" value="Chromosome I"/>
</dbReference>
<dbReference type="GO" id="GO:0005524">
    <property type="term" value="F:ATP binding"/>
    <property type="evidence" value="ECO:0007669"/>
    <property type="project" value="UniProtKB-UniRule"/>
</dbReference>
<dbReference type="GO" id="GO:0052381">
    <property type="term" value="F:tRNA dimethylallyltransferase activity"/>
    <property type="evidence" value="ECO:0007669"/>
    <property type="project" value="UniProtKB-UniRule"/>
</dbReference>
<dbReference type="GO" id="GO:0006400">
    <property type="term" value="P:tRNA modification"/>
    <property type="evidence" value="ECO:0007669"/>
    <property type="project" value="TreeGrafter"/>
</dbReference>
<dbReference type="FunFam" id="1.10.20.140:FF:000001">
    <property type="entry name" value="tRNA dimethylallyltransferase"/>
    <property type="match status" value="1"/>
</dbReference>
<dbReference type="Gene3D" id="1.10.20.140">
    <property type="match status" value="1"/>
</dbReference>
<dbReference type="Gene3D" id="3.40.50.300">
    <property type="entry name" value="P-loop containing nucleotide triphosphate hydrolases"/>
    <property type="match status" value="1"/>
</dbReference>
<dbReference type="HAMAP" id="MF_00185">
    <property type="entry name" value="IPP_trans"/>
    <property type="match status" value="1"/>
</dbReference>
<dbReference type="InterPro" id="IPR039657">
    <property type="entry name" value="Dimethylallyltransferase"/>
</dbReference>
<dbReference type="InterPro" id="IPR018022">
    <property type="entry name" value="IPT"/>
</dbReference>
<dbReference type="InterPro" id="IPR027417">
    <property type="entry name" value="P-loop_NTPase"/>
</dbReference>
<dbReference type="NCBIfam" id="TIGR00174">
    <property type="entry name" value="miaA"/>
    <property type="match status" value="1"/>
</dbReference>
<dbReference type="PANTHER" id="PTHR11088">
    <property type="entry name" value="TRNA DIMETHYLALLYLTRANSFERASE"/>
    <property type="match status" value="1"/>
</dbReference>
<dbReference type="PANTHER" id="PTHR11088:SF60">
    <property type="entry name" value="TRNA DIMETHYLALLYLTRANSFERASE"/>
    <property type="match status" value="1"/>
</dbReference>
<dbReference type="Pfam" id="PF01715">
    <property type="entry name" value="IPPT"/>
    <property type="match status" value="1"/>
</dbReference>
<dbReference type="SUPFAM" id="SSF52540">
    <property type="entry name" value="P-loop containing nucleoside triphosphate hydrolases"/>
    <property type="match status" value="1"/>
</dbReference>
<protein>
    <recommendedName>
        <fullName evidence="1">tRNA dimethylallyltransferase</fullName>
        <ecNumber evidence="1">2.5.1.75</ecNumber>
    </recommendedName>
    <alternativeName>
        <fullName evidence="1">Dimethylallyl diphosphate:tRNA dimethylallyltransferase</fullName>
        <shortName evidence="1">DMAPP:tRNA dimethylallyltransferase</shortName>
        <shortName evidence="1">DMATase</shortName>
    </alternativeName>
    <alternativeName>
        <fullName evidence="1">Isopentenyl-diphosphate:tRNA isopentenyltransferase</fullName>
        <shortName evidence="1">IPP transferase</shortName>
        <shortName evidence="1">IPPT</shortName>
        <shortName evidence="1">IPTase</shortName>
    </alternativeName>
</protein>
<feature type="chain" id="PRO_1000098699" description="tRNA dimethylallyltransferase">
    <location>
        <begin position="1"/>
        <end position="310"/>
    </location>
</feature>
<feature type="region of interest" description="Interaction with substrate tRNA" evidence="1">
    <location>
        <begin position="38"/>
        <end position="41"/>
    </location>
</feature>
<feature type="region of interest" description="Interaction with substrate tRNA" evidence="1">
    <location>
        <begin position="162"/>
        <end position="166"/>
    </location>
</feature>
<feature type="region of interest" description="Interaction with substrate tRNA" evidence="1">
    <location>
        <begin position="243"/>
        <end position="248"/>
    </location>
</feature>
<feature type="region of interest" description="Interaction with substrate tRNA" evidence="1">
    <location>
        <begin position="276"/>
        <end position="283"/>
    </location>
</feature>
<feature type="binding site" evidence="1">
    <location>
        <begin position="13"/>
        <end position="20"/>
    </location>
    <ligand>
        <name>ATP</name>
        <dbReference type="ChEBI" id="CHEBI:30616"/>
    </ligand>
</feature>
<feature type="binding site" evidence="1">
    <location>
        <begin position="15"/>
        <end position="20"/>
    </location>
    <ligand>
        <name>substrate</name>
    </ligand>
</feature>
<feature type="site" description="Interaction with substrate tRNA" evidence="1">
    <location>
        <position position="104"/>
    </location>
</feature>
<feature type="site" description="Interaction with substrate tRNA" evidence="1">
    <location>
        <position position="126"/>
    </location>
</feature>
<proteinExistence type="inferred from homology"/>
<reference key="1">
    <citation type="submission" date="2008-08" db="EMBL/GenBank/DDBJ databases">
        <title>Complete sequence of Vibrio fischeri strain MJ11.</title>
        <authorList>
            <person name="Mandel M.J."/>
            <person name="Stabb E.V."/>
            <person name="Ruby E.G."/>
            <person name="Ferriera S."/>
            <person name="Johnson J."/>
            <person name="Kravitz S."/>
            <person name="Beeson K."/>
            <person name="Sutton G."/>
            <person name="Rogers Y.-H."/>
            <person name="Friedman R."/>
            <person name="Frazier M."/>
            <person name="Venter J.C."/>
        </authorList>
    </citation>
    <scope>NUCLEOTIDE SEQUENCE [LARGE SCALE GENOMIC DNA]</scope>
    <source>
        <strain>MJ11</strain>
    </source>
</reference>
<accession>B5FBR5</accession>